<reference key="1">
    <citation type="journal article" date="2000" name="Mol. Microbiol.">
        <title>Evidence of recent lateral gene transfer among hyperthermophilic archaea.</title>
        <authorList>
            <person name="Diruggiero J."/>
            <person name="Dunn D."/>
            <person name="Maeder D.L."/>
            <person name="Holley-Shanks R."/>
            <person name="Chatard J."/>
            <person name="Horlacher R."/>
            <person name="Robb F.T."/>
            <person name="Boos W."/>
            <person name="Weiss R.B."/>
        </authorList>
    </citation>
    <scope>NUCLEOTIDE SEQUENCE [GENOMIC DNA]</scope>
    <source>
        <strain>ATCC 51850 / DSM 5473 / JCM 8560 / NS-C</strain>
    </source>
</reference>
<reference key="2">
    <citation type="journal article" date="2012" name="J. Bacteriol.">
        <title>Genome sequence of the model hyperthermophilic archaeon Thermococcus litoralis NS-C.</title>
        <authorList>
            <person name="Gardner A.F."/>
            <person name="Kumar S."/>
            <person name="Perler F.B."/>
        </authorList>
    </citation>
    <scope>NUCLEOTIDE SEQUENCE [LARGE SCALE GENOMIC DNA]</scope>
    <source>
        <strain>ATCC 51850 / DSM 5473 / JCM 8560 / NS-C</strain>
    </source>
</reference>
<reference key="3">
    <citation type="journal article" date="2003" name="J. Biol. Chem.">
        <title>TrmB, a sugar-specific transcriptional regulator of the trehalose/maltose ABC transporter from the hyperthermophilic archaeon Thermococcus litoralis.</title>
        <authorList>
            <person name="Lee S.J."/>
            <person name="Engelmann A."/>
            <person name="Horlacher R."/>
            <person name="Qu Q."/>
            <person name="Vierke G."/>
            <person name="Hebbeln C."/>
            <person name="Thomm M."/>
            <person name="Boos W."/>
        </authorList>
    </citation>
    <scope>FUNCTION</scope>
    <scope>DNA-BINDING</scope>
    <scope>ACTIVITY REGULATION</scope>
    <scope>GENE NAME</scope>
</reference>
<reference evidence="5" key="4">
    <citation type="journal article" date="2006" name="J. Biol. Chem.">
        <title>Crystal structure of the sugar binding domain of the archaeal transcriptional regulator TrmB.</title>
        <authorList>
            <person name="Krug M."/>
            <person name="Lee S.J."/>
            <person name="Diederichs K."/>
            <person name="Boos W."/>
            <person name="Welte W."/>
        </authorList>
    </citation>
    <scope>X-RAY CRYSTALLOGRAPHY (1.45 ANGSTROMS) OF 110-338 IN COMPLEX WITH MALTOSE</scope>
    <scope>SUBUNIT</scope>
    <scope>DOMAIN</scope>
</reference>
<organism>
    <name type="scientific">Thermococcus litoralis (strain ATCC 51850 / DSM 5473 / JCM 8560 / NS-C)</name>
    <dbReference type="NCBI Taxonomy" id="523849"/>
    <lineage>
        <taxon>Archaea</taxon>
        <taxon>Methanobacteriati</taxon>
        <taxon>Methanobacteriota</taxon>
        <taxon>Thermococci</taxon>
        <taxon>Thermococcales</taxon>
        <taxon>Thermococcaceae</taxon>
        <taxon>Thermococcus</taxon>
    </lineage>
</organism>
<gene>
    <name type="primary">trmB</name>
    <name type="ORF">OCC_03542</name>
</gene>
<dbReference type="EMBL" id="AF307053">
    <property type="protein sequence ID" value="AAG45392.1"/>
    <property type="molecule type" value="Genomic_DNA"/>
</dbReference>
<dbReference type="EMBL" id="CP006670">
    <property type="protein sequence ID" value="EHR78230.1"/>
    <property type="molecule type" value="Genomic_DNA"/>
</dbReference>
<dbReference type="RefSeq" id="WP_004068718.1">
    <property type="nucleotide sequence ID" value="NC_022084.1"/>
</dbReference>
<dbReference type="PDB" id="2F5T">
    <property type="method" value="X-ray"/>
    <property type="resolution" value="1.45 A"/>
    <property type="chains" value="X=110-338"/>
</dbReference>
<dbReference type="PDBsum" id="2F5T"/>
<dbReference type="SMR" id="Q7LYW4"/>
<dbReference type="STRING" id="523849.OCC_03542"/>
<dbReference type="PaxDb" id="523849-OCC_03542"/>
<dbReference type="GeneID" id="16548945"/>
<dbReference type="KEGG" id="tlt:OCC_03542"/>
<dbReference type="HOGENOM" id="CLU_062979_2_0_2"/>
<dbReference type="OrthoDB" id="96194at2157"/>
<dbReference type="EvolutionaryTrace" id="Q7LYW4"/>
<dbReference type="Proteomes" id="UP000015502">
    <property type="component" value="Chromosome"/>
</dbReference>
<dbReference type="GO" id="GO:0003677">
    <property type="term" value="F:DNA binding"/>
    <property type="evidence" value="ECO:0007669"/>
    <property type="project" value="UniProtKB-KW"/>
</dbReference>
<dbReference type="CDD" id="cd09124">
    <property type="entry name" value="PLDc_like_TrmB_middle"/>
    <property type="match status" value="1"/>
</dbReference>
<dbReference type="Gene3D" id="2.30.30.690">
    <property type="match status" value="1"/>
</dbReference>
<dbReference type="Gene3D" id="3.30.870.10">
    <property type="entry name" value="Endonuclease Chain A"/>
    <property type="match status" value="1"/>
</dbReference>
<dbReference type="Gene3D" id="1.10.10.10">
    <property type="entry name" value="Winged helix-like DNA-binding domain superfamily/Winged helix DNA-binding domain"/>
    <property type="match status" value="1"/>
</dbReference>
<dbReference type="InterPro" id="IPR054965">
    <property type="entry name" value="tran_reg_TrmB"/>
</dbReference>
<dbReference type="InterPro" id="IPR051797">
    <property type="entry name" value="TrmB-like"/>
</dbReference>
<dbReference type="InterPro" id="IPR021586">
    <property type="entry name" value="Tscrpt_reg_TrmB_C"/>
</dbReference>
<dbReference type="InterPro" id="IPR002831">
    <property type="entry name" value="Tscrpt_reg_TrmB_N"/>
</dbReference>
<dbReference type="InterPro" id="IPR036388">
    <property type="entry name" value="WH-like_DNA-bd_sf"/>
</dbReference>
<dbReference type="InterPro" id="IPR036390">
    <property type="entry name" value="WH_DNA-bd_sf"/>
</dbReference>
<dbReference type="NCBIfam" id="NF040851">
    <property type="entry name" value="tran_reg_TrmB"/>
    <property type="match status" value="1"/>
</dbReference>
<dbReference type="PANTHER" id="PTHR34293">
    <property type="entry name" value="HTH-TYPE TRANSCRIPTIONAL REGULATOR TRMBL2"/>
    <property type="match status" value="1"/>
</dbReference>
<dbReference type="PANTHER" id="PTHR34293:SF1">
    <property type="entry name" value="HTH-TYPE TRANSCRIPTIONAL REGULATOR TRMBL2"/>
    <property type="match status" value="1"/>
</dbReference>
<dbReference type="Pfam" id="PF11495">
    <property type="entry name" value="Regulator_TrmB"/>
    <property type="match status" value="1"/>
</dbReference>
<dbReference type="Pfam" id="PF01978">
    <property type="entry name" value="TrmB"/>
    <property type="match status" value="1"/>
</dbReference>
<dbReference type="SUPFAM" id="SSF56024">
    <property type="entry name" value="Phospholipase D/nuclease"/>
    <property type="match status" value="1"/>
</dbReference>
<dbReference type="SUPFAM" id="SSF159071">
    <property type="entry name" value="TrmB C-terminal domain-like"/>
    <property type="match status" value="1"/>
</dbReference>
<dbReference type="SUPFAM" id="SSF46785">
    <property type="entry name" value="Winged helix' DNA-binding domain"/>
    <property type="match status" value="1"/>
</dbReference>
<comment type="function">
    <text evidence="2">Inhibits transcription of the trehalose/maltose transport gene cluster (malE operon). Acts by binding to two different operator sequences in the promoter, preventing polymerase recruitment and transcription.</text>
</comment>
<comment type="activity regulation">
    <text evidence="2">Repressor activity is regulated by binding of sugars to TrmB. Binding of maltose and trehalose results in derepression of the malE operon. Maltose is much more effective (50-100 uM) than trehalose (2.5 mM).</text>
</comment>
<comment type="subunit">
    <text evidence="3">Homodimer.</text>
</comment>
<comment type="domain">
    <text evidence="3">Contains an N-terminal DNA-binding domain and a C-terminal sugar-binding domain.</text>
</comment>
<comment type="similarity">
    <text evidence="4">Belongs to the transcriptional regulator TrmB family.</text>
</comment>
<evidence type="ECO:0000255" key="1"/>
<evidence type="ECO:0000269" key="2">
    <source>
    </source>
</evidence>
<evidence type="ECO:0000269" key="3">
    <source>
    </source>
</evidence>
<evidence type="ECO:0000305" key="4"/>
<evidence type="ECO:0007744" key="5">
    <source>
        <dbReference type="PDB" id="2F5T"/>
    </source>
</evidence>
<evidence type="ECO:0007829" key="6">
    <source>
        <dbReference type="PDB" id="2F5T"/>
    </source>
</evidence>
<keyword id="KW-0002">3D-structure</keyword>
<keyword id="KW-0238">DNA-binding</keyword>
<keyword id="KW-0678">Repressor</keyword>
<keyword id="KW-0804">Transcription</keyword>
<keyword id="KW-0805">Transcription regulation</keyword>
<accession>Q7LYW4</accession>
<accession>H3ZP63</accession>
<proteinExistence type="evidence at protein level"/>
<name>TRMBR_THELN</name>
<sequence length="338" mass="38839">MEIPPEISHALSEIGFTKYEILTYWTLLVYGPSTAKEISTKSGIPYNRVYDTISSLKLRGFVTEIEGTPKVYAAYSPRIAFFRFKKELEDIMKKLEIELNNVKKEEQRPAIWRSRSFDEAIEMFRESLYSAKNEVIVVTPSEFFETIREDLIKTLERGVTVSLYIDKIPDLSEFKGKGNFFVRQFYKLNHLIGMTDGKEVVTIQNATFDSIGPPSFKSTYPEIIFSQYSLIIEIFKESTLEKEIIGNPKDIRFFAMFHAVDFVKNHLKNRNIYAEITGKNLESGRLETLTGRVVGYTLSLREAVNNIHLETENGVVKVGGMFAVIEDYESTEIKFIMG</sequence>
<feature type="chain" id="PRO_0000428842" description="HTH-type sugar sensing transcriptional regulator TrmB">
    <location>
        <begin position="1"/>
        <end position="338"/>
    </location>
</feature>
<feature type="DNA-binding region" description="H-T-H motif" evidence="1">
    <location>
        <begin position="33"/>
        <end position="54"/>
    </location>
</feature>
<feature type="binding site" evidence="3 5">
    <location>
        <position position="189"/>
    </location>
    <ligand>
        <name>alpha-maltose</name>
        <dbReference type="ChEBI" id="CHEBI:18167"/>
    </ligand>
</feature>
<feature type="binding site" evidence="3 5">
    <location>
        <position position="229"/>
    </location>
    <ligand>
        <name>alpha-maltose</name>
        <dbReference type="ChEBI" id="CHEBI:18167"/>
    </ligand>
</feature>
<feature type="binding site" evidence="3 5">
    <location>
        <position position="305"/>
    </location>
    <ligand>
        <name>alpha-maltose</name>
        <dbReference type="ChEBI" id="CHEBI:18167"/>
    </ligand>
</feature>
<feature type="binding site" evidence="3 5">
    <location>
        <begin position="320"/>
        <end position="326"/>
    </location>
    <ligand>
        <name>alpha-maltose</name>
        <dbReference type="ChEBI" id="CHEBI:18167"/>
    </ligand>
</feature>
<feature type="strand" evidence="6">
    <location>
        <begin position="111"/>
        <end position="115"/>
    </location>
</feature>
<feature type="helix" evidence="6">
    <location>
        <begin position="117"/>
        <end position="129"/>
    </location>
</feature>
<feature type="strand" evidence="6">
    <location>
        <begin position="132"/>
        <end position="139"/>
    </location>
</feature>
<feature type="helix" evidence="6">
    <location>
        <begin position="141"/>
        <end position="143"/>
    </location>
</feature>
<feature type="helix" evidence="6">
    <location>
        <begin position="144"/>
        <end position="156"/>
    </location>
</feature>
<feature type="strand" evidence="6">
    <location>
        <begin position="160"/>
        <end position="167"/>
    </location>
</feature>
<feature type="helix" evidence="6">
    <location>
        <begin position="172"/>
        <end position="174"/>
    </location>
</feature>
<feature type="strand" evidence="6">
    <location>
        <begin position="177"/>
        <end position="184"/>
    </location>
</feature>
<feature type="strand" evidence="6">
    <location>
        <begin position="190"/>
        <end position="195"/>
    </location>
</feature>
<feature type="turn" evidence="6">
    <location>
        <begin position="196"/>
        <end position="198"/>
    </location>
</feature>
<feature type="strand" evidence="6">
    <location>
        <begin position="199"/>
        <end position="203"/>
    </location>
</feature>
<feature type="turn" evidence="6">
    <location>
        <begin position="204"/>
        <end position="208"/>
    </location>
</feature>
<feature type="strand" evidence="6">
    <location>
        <begin position="210"/>
        <end position="212"/>
    </location>
</feature>
<feature type="strand" evidence="6">
    <location>
        <begin position="215"/>
        <end position="218"/>
    </location>
</feature>
<feature type="helix" evidence="6">
    <location>
        <begin position="221"/>
        <end position="236"/>
    </location>
</feature>
<feature type="strand" evidence="6">
    <location>
        <begin position="239"/>
        <end position="246"/>
    </location>
</feature>
<feature type="strand" evidence="6">
    <location>
        <begin position="251"/>
        <end position="254"/>
    </location>
</feature>
<feature type="helix" evidence="6">
    <location>
        <begin position="256"/>
        <end position="266"/>
    </location>
</feature>
<feature type="turn" evidence="6">
    <location>
        <begin position="267"/>
        <end position="269"/>
    </location>
</feature>
<feature type="strand" evidence="6">
    <location>
        <begin position="272"/>
        <end position="280"/>
    </location>
</feature>
<feature type="turn" evidence="6">
    <location>
        <begin position="281"/>
        <end position="283"/>
    </location>
</feature>
<feature type="strand" evidence="6">
    <location>
        <begin position="286"/>
        <end position="299"/>
    </location>
</feature>
<feature type="turn" evidence="6">
    <location>
        <begin position="300"/>
        <end position="303"/>
    </location>
</feature>
<feature type="strand" evidence="6">
    <location>
        <begin position="304"/>
        <end position="311"/>
    </location>
</feature>
<feature type="strand" evidence="6">
    <location>
        <begin position="314"/>
        <end position="319"/>
    </location>
</feature>
<feature type="strand" evidence="6">
    <location>
        <begin position="325"/>
        <end position="337"/>
    </location>
</feature>
<protein>
    <recommendedName>
        <fullName>HTH-type sugar sensing transcriptional regulator TrmB</fullName>
    </recommendedName>
    <alternativeName>
        <fullName>Transcriptional regulator of mal operon</fullName>
    </alternativeName>
</protein>